<reference key="1">
    <citation type="journal article" date="2004" name="Genome Res.">
        <title>The status, quality, and expansion of the NIH full-length cDNA project: the Mammalian Gene Collection (MGC).</title>
        <authorList>
            <consortium name="The MGC Project Team"/>
        </authorList>
    </citation>
    <scope>NUCLEOTIDE SEQUENCE [LARGE SCALE MRNA]</scope>
    <source>
        <tissue>Prostate</tissue>
    </source>
</reference>
<reference key="2">
    <citation type="journal article" date="2012" name="Nat. Commun.">
        <title>Quantitative maps of protein phosphorylation sites across 14 different rat organs and tissues.</title>
        <authorList>
            <person name="Lundby A."/>
            <person name="Secher A."/>
            <person name="Lage K."/>
            <person name="Nordsborg N.B."/>
            <person name="Dmytriyev A."/>
            <person name="Lundby C."/>
            <person name="Olsen J.V."/>
        </authorList>
    </citation>
    <scope>IDENTIFICATION BY MASS SPECTROMETRY [LARGE SCALE ANALYSIS]</scope>
</reference>
<feature type="chain" id="PRO_0000280517" description="Ubiquitin-conjugating enzyme E2 Z">
    <location>
        <begin position="1"/>
        <end position="356"/>
    </location>
</feature>
<feature type="domain" description="UBC core" evidence="3">
    <location>
        <begin position="101"/>
        <end position="255"/>
    </location>
</feature>
<feature type="region of interest" description="Disordered" evidence="4">
    <location>
        <begin position="1"/>
        <end position="22"/>
    </location>
</feature>
<feature type="region of interest" description="Disordered" evidence="4">
    <location>
        <begin position="334"/>
        <end position="356"/>
    </location>
</feature>
<feature type="compositionally biased region" description="Low complexity" evidence="4">
    <location>
        <begin position="1"/>
        <end position="16"/>
    </location>
</feature>
<feature type="active site" description="Glycyl thioester intermediate" evidence="3">
    <location>
        <position position="190"/>
    </location>
</feature>
<feature type="modified residue" description="Phosphoserine" evidence="1">
    <location>
        <position position="339"/>
    </location>
</feature>
<comment type="function">
    <text evidence="3">Catalyzes the covalent attachment of ubiquitin to other proteins. Specific substrate for UBA6, not charged with ubiquitin by UBE1. May be involved in apoptosis regulation.</text>
</comment>
<comment type="catalytic activity">
    <reaction evidence="3">
        <text>S-ubiquitinyl-[E1 ubiquitin-activating enzyme]-L-cysteine + [E2 ubiquitin-conjugating enzyme]-L-cysteine = [E1 ubiquitin-activating enzyme]-L-cysteine + S-ubiquitinyl-[E2 ubiquitin-conjugating enzyme]-L-cysteine.</text>
        <dbReference type="EC" id="2.3.2.23"/>
    </reaction>
</comment>
<comment type="pathway">
    <text evidence="3">Protein modification; protein ubiquitination.</text>
</comment>
<comment type="subcellular location">
    <subcellularLocation>
        <location evidence="2">Cytoplasm</location>
    </subcellularLocation>
    <subcellularLocation>
        <location evidence="2">Nucleus</location>
    </subcellularLocation>
</comment>
<comment type="similarity">
    <text evidence="3">Belongs to the ubiquitin-conjugating enzyme family.</text>
</comment>
<comment type="sequence caution" evidence="5">
    <conflict type="erroneous initiation">
        <sequence resource="EMBL-CDS" id="AAI07664"/>
    </conflict>
</comment>
<dbReference type="EC" id="2.3.2.23"/>
<dbReference type="EMBL" id="BC107663">
    <property type="protein sequence ID" value="AAI07664.1"/>
    <property type="status" value="ALT_INIT"/>
    <property type="molecule type" value="mRNA"/>
</dbReference>
<dbReference type="RefSeq" id="NP_001032732.2">
    <property type="nucleotide sequence ID" value="NM_001037643.2"/>
</dbReference>
<dbReference type="SMR" id="Q3B7D1"/>
<dbReference type="FunCoup" id="Q3B7D1">
    <property type="interactions" value="4392"/>
</dbReference>
<dbReference type="STRING" id="10116.ENSRNOP00000052365"/>
<dbReference type="iPTMnet" id="Q3B7D1"/>
<dbReference type="PhosphoSitePlus" id="Q3B7D1"/>
<dbReference type="jPOST" id="Q3B7D1"/>
<dbReference type="PaxDb" id="10116-ENSRNOP00000052365"/>
<dbReference type="Ensembl" id="ENSRNOT00000055500.3">
    <property type="protein sequence ID" value="ENSRNOP00000052365.2"/>
    <property type="gene ID" value="ENSRNOG00000006868.5"/>
</dbReference>
<dbReference type="GeneID" id="303478"/>
<dbReference type="KEGG" id="rno:303478"/>
<dbReference type="UCSC" id="RGD:1308347">
    <property type="organism name" value="rat"/>
</dbReference>
<dbReference type="AGR" id="RGD:1308347"/>
<dbReference type="CTD" id="65264"/>
<dbReference type="RGD" id="1308347">
    <property type="gene designation" value="Ube2z"/>
</dbReference>
<dbReference type="eggNOG" id="KOG0895">
    <property type="taxonomic scope" value="Eukaryota"/>
</dbReference>
<dbReference type="GeneTree" id="ENSGT00940000159091"/>
<dbReference type="HOGENOM" id="CLU_025097_2_0_1"/>
<dbReference type="InParanoid" id="Q3B7D1"/>
<dbReference type="OMA" id="KHQQENP"/>
<dbReference type="OrthoDB" id="47801at2759"/>
<dbReference type="PhylomeDB" id="Q3B7D1"/>
<dbReference type="TreeFam" id="TF354204"/>
<dbReference type="Reactome" id="R-RNO-8866652">
    <property type="pathway name" value="Synthesis of active ubiquitin: roles of E1 and E2 enzymes"/>
</dbReference>
<dbReference type="Reactome" id="R-RNO-983168">
    <property type="pathway name" value="Antigen processing: Ubiquitination &amp; Proteasome degradation"/>
</dbReference>
<dbReference type="UniPathway" id="UPA00143"/>
<dbReference type="PRO" id="PR:Q3B7D1"/>
<dbReference type="Proteomes" id="UP000002494">
    <property type="component" value="Chromosome 10"/>
</dbReference>
<dbReference type="Bgee" id="ENSRNOG00000006868">
    <property type="expression patterns" value="Expressed in jejunum and 19 other cell types or tissues"/>
</dbReference>
<dbReference type="GO" id="GO:0005829">
    <property type="term" value="C:cytosol"/>
    <property type="evidence" value="ECO:0007669"/>
    <property type="project" value="Ensembl"/>
</dbReference>
<dbReference type="GO" id="GO:0005654">
    <property type="term" value="C:nucleoplasm"/>
    <property type="evidence" value="ECO:0007669"/>
    <property type="project" value="Ensembl"/>
</dbReference>
<dbReference type="GO" id="GO:0005634">
    <property type="term" value="C:nucleus"/>
    <property type="evidence" value="ECO:0000266"/>
    <property type="project" value="RGD"/>
</dbReference>
<dbReference type="GO" id="GO:0005524">
    <property type="term" value="F:ATP binding"/>
    <property type="evidence" value="ECO:0007669"/>
    <property type="project" value="UniProtKB-KW"/>
</dbReference>
<dbReference type="GO" id="GO:0060090">
    <property type="term" value="F:molecular adaptor activity"/>
    <property type="evidence" value="ECO:0000266"/>
    <property type="project" value="RGD"/>
</dbReference>
<dbReference type="GO" id="GO:0061631">
    <property type="term" value="F:ubiquitin conjugating enzyme activity"/>
    <property type="evidence" value="ECO:0000266"/>
    <property type="project" value="RGD"/>
</dbReference>
<dbReference type="GO" id="GO:0006915">
    <property type="term" value="P:apoptotic process"/>
    <property type="evidence" value="ECO:0007669"/>
    <property type="project" value="UniProtKB-KW"/>
</dbReference>
<dbReference type="GO" id="GO:0043066">
    <property type="term" value="P:negative regulation of apoptotic process"/>
    <property type="evidence" value="ECO:0000318"/>
    <property type="project" value="GO_Central"/>
</dbReference>
<dbReference type="GO" id="GO:0043065">
    <property type="term" value="P:positive regulation of apoptotic process"/>
    <property type="evidence" value="ECO:0000266"/>
    <property type="project" value="RGD"/>
</dbReference>
<dbReference type="GO" id="GO:0016567">
    <property type="term" value="P:protein ubiquitination"/>
    <property type="evidence" value="ECO:0007669"/>
    <property type="project" value="UniProtKB-UniPathway"/>
</dbReference>
<dbReference type="GO" id="GO:0006511">
    <property type="term" value="P:ubiquitin-dependent protein catabolic process"/>
    <property type="evidence" value="ECO:0000266"/>
    <property type="project" value="RGD"/>
</dbReference>
<dbReference type="CDD" id="cd23809">
    <property type="entry name" value="UBCc_UBE2Z"/>
    <property type="match status" value="1"/>
</dbReference>
<dbReference type="FunFam" id="3.10.110.10:FF:000046">
    <property type="entry name" value="Ubiquitin-conjugating enzyme E2 Z"/>
    <property type="match status" value="1"/>
</dbReference>
<dbReference type="Gene3D" id="3.10.110.10">
    <property type="entry name" value="Ubiquitin Conjugating Enzyme"/>
    <property type="match status" value="1"/>
</dbReference>
<dbReference type="InterPro" id="IPR000608">
    <property type="entry name" value="UBQ-conjugat_E2_core"/>
</dbReference>
<dbReference type="InterPro" id="IPR016135">
    <property type="entry name" value="UBQ-conjugating_enzyme/RWD"/>
</dbReference>
<dbReference type="PANTHER" id="PTHR46116">
    <property type="entry name" value="(E3-INDEPENDENT) E2 UBIQUITIN-CONJUGATING ENZYME"/>
    <property type="match status" value="1"/>
</dbReference>
<dbReference type="PANTHER" id="PTHR46116:SF26">
    <property type="entry name" value="UBIQUITIN-CONJUGATING ENZYME E2 Z"/>
    <property type="match status" value="1"/>
</dbReference>
<dbReference type="Pfam" id="PF00179">
    <property type="entry name" value="UQ_con"/>
    <property type="match status" value="1"/>
</dbReference>
<dbReference type="SMART" id="SM00212">
    <property type="entry name" value="UBCc"/>
    <property type="match status" value="1"/>
</dbReference>
<dbReference type="SUPFAM" id="SSF54495">
    <property type="entry name" value="UBC-like"/>
    <property type="match status" value="1"/>
</dbReference>
<dbReference type="PROSITE" id="PS50127">
    <property type="entry name" value="UBC_2"/>
    <property type="match status" value="1"/>
</dbReference>
<accession>Q3B7D1</accession>
<gene>
    <name type="primary">Ube2z</name>
</gene>
<protein>
    <recommendedName>
        <fullName>Ubiquitin-conjugating enzyme E2 Z</fullName>
        <ecNumber>2.3.2.23</ecNumber>
    </recommendedName>
    <alternativeName>
        <fullName>E2 ubiquitin-conjugating enzyme Z</fullName>
    </alternativeName>
    <alternativeName>
        <fullName>Uba6-specific E2 conjugating enzyme 1</fullName>
        <shortName>Use1</shortName>
    </alternativeName>
    <alternativeName>
        <fullName>Ubiquitin carrier protein Z</fullName>
    </alternativeName>
    <alternativeName>
        <fullName>Ubiquitin-protein ligase Z</fullName>
    </alternativeName>
</protein>
<name>UBE2Z_RAT</name>
<sequence length="356" mass="38352">MAESPTEEAATATAGAGAAGPGASGVAGVVGVSGSGGGFGPPFLPDVWAAAAAAGGAGGPGSGLAPLPGLPPSAAAHGAALLSHWDPTLSSDWDGERTAPQCLLRIKRDIMSIYKEPPPGMFVVPDTVDMTKIHALITGPFDTPYEGGFFLFVFRCPPDYPIHPPRVKLMTTGNNTVRFNPNFYRNGKVCLSILGTWTGPAWSPAQSISSVLISIQSLMTENPYHNEPGFEQERHPGDSKNYNECIRHETIRVAVCDMMEGKCPCPEPLRGVMEKSFLEYYDFYEVACKDRLHLQGQTMQDPFGEKRGHFDYQSLLMRLGLIRQKVLERLHNENAEMDSDSSSSGTETDLHGSLRV</sequence>
<organism>
    <name type="scientific">Rattus norvegicus</name>
    <name type="common">Rat</name>
    <dbReference type="NCBI Taxonomy" id="10116"/>
    <lineage>
        <taxon>Eukaryota</taxon>
        <taxon>Metazoa</taxon>
        <taxon>Chordata</taxon>
        <taxon>Craniata</taxon>
        <taxon>Vertebrata</taxon>
        <taxon>Euteleostomi</taxon>
        <taxon>Mammalia</taxon>
        <taxon>Eutheria</taxon>
        <taxon>Euarchontoglires</taxon>
        <taxon>Glires</taxon>
        <taxon>Rodentia</taxon>
        <taxon>Myomorpha</taxon>
        <taxon>Muroidea</taxon>
        <taxon>Muridae</taxon>
        <taxon>Murinae</taxon>
        <taxon>Rattus</taxon>
    </lineage>
</organism>
<keyword id="KW-0053">Apoptosis</keyword>
<keyword id="KW-0067">ATP-binding</keyword>
<keyword id="KW-0963">Cytoplasm</keyword>
<keyword id="KW-0547">Nucleotide-binding</keyword>
<keyword id="KW-0539">Nucleus</keyword>
<keyword id="KW-0597">Phosphoprotein</keyword>
<keyword id="KW-1185">Reference proteome</keyword>
<keyword id="KW-0808">Transferase</keyword>
<keyword id="KW-0833">Ubl conjugation pathway</keyword>
<evidence type="ECO:0000250" key="1">
    <source>
        <dbReference type="UniProtKB" id="Q3UE37"/>
    </source>
</evidence>
<evidence type="ECO:0000250" key="2">
    <source>
        <dbReference type="UniProtKB" id="Q9H832"/>
    </source>
</evidence>
<evidence type="ECO:0000255" key="3">
    <source>
        <dbReference type="PROSITE-ProRule" id="PRU00388"/>
    </source>
</evidence>
<evidence type="ECO:0000256" key="4">
    <source>
        <dbReference type="SAM" id="MobiDB-lite"/>
    </source>
</evidence>
<evidence type="ECO:0000305" key="5"/>
<proteinExistence type="evidence at protein level"/>